<comment type="function">
    <text evidence="1">Acts as a chaperone.</text>
</comment>
<comment type="induction">
    <text evidence="1">By stress conditions e.g. heat shock.</text>
</comment>
<comment type="similarity">
    <text evidence="1">Belongs to the heat shock protein 70 family.</text>
</comment>
<feature type="chain" id="PRO_1000059531" description="Chaperone protein DnaK">
    <location>
        <begin position="1"/>
        <end position="634"/>
    </location>
</feature>
<feature type="region of interest" description="Disordered" evidence="2">
    <location>
        <begin position="515"/>
        <end position="536"/>
    </location>
</feature>
<feature type="region of interest" description="Disordered" evidence="2">
    <location>
        <begin position="595"/>
        <end position="634"/>
    </location>
</feature>
<feature type="compositionally biased region" description="Basic and acidic residues" evidence="2">
    <location>
        <begin position="515"/>
        <end position="528"/>
    </location>
</feature>
<feature type="compositionally biased region" description="Gly residues" evidence="2">
    <location>
        <begin position="603"/>
        <end position="615"/>
    </location>
</feature>
<feature type="modified residue" description="Phosphothreonine; by autocatalysis" evidence="1">
    <location>
        <position position="197"/>
    </location>
</feature>
<keyword id="KW-0067">ATP-binding</keyword>
<keyword id="KW-0143">Chaperone</keyword>
<keyword id="KW-0547">Nucleotide-binding</keyword>
<keyword id="KW-0597">Phosphoprotein</keyword>
<keyword id="KW-1185">Reference proteome</keyword>
<keyword id="KW-0346">Stress response</keyword>
<proteinExistence type="inferred from homology"/>
<name>DNAK_CAMHC</name>
<organism>
    <name type="scientific">Campylobacter hominis (strain ATCC BAA-381 / DSM 21671 / CCUG 45161 / LMG 19568 / NCTC 13146 / CH001A)</name>
    <dbReference type="NCBI Taxonomy" id="360107"/>
    <lineage>
        <taxon>Bacteria</taxon>
        <taxon>Pseudomonadati</taxon>
        <taxon>Campylobacterota</taxon>
        <taxon>Epsilonproteobacteria</taxon>
        <taxon>Campylobacterales</taxon>
        <taxon>Campylobacteraceae</taxon>
        <taxon>Campylobacter</taxon>
    </lineage>
</organism>
<dbReference type="EMBL" id="CP000776">
    <property type="protein sequence ID" value="ABS51676.1"/>
    <property type="molecule type" value="Genomic_DNA"/>
</dbReference>
<dbReference type="RefSeq" id="WP_012108974.1">
    <property type="nucleotide sequence ID" value="NC_009714.1"/>
</dbReference>
<dbReference type="SMR" id="A7I2D4"/>
<dbReference type="STRING" id="360107.CHAB381_1119"/>
<dbReference type="KEGG" id="cha:CHAB381_1119"/>
<dbReference type="eggNOG" id="COG0443">
    <property type="taxonomic scope" value="Bacteria"/>
</dbReference>
<dbReference type="HOGENOM" id="CLU_005965_2_1_7"/>
<dbReference type="OrthoDB" id="9766019at2"/>
<dbReference type="Proteomes" id="UP000002407">
    <property type="component" value="Chromosome"/>
</dbReference>
<dbReference type="GO" id="GO:0005524">
    <property type="term" value="F:ATP binding"/>
    <property type="evidence" value="ECO:0007669"/>
    <property type="project" value="UniProtKB-UniRule"/>
</dbReference>
<dbReference type="GO" id="GO:0140662">
    <property type="term" value="F:ATP-dependent protein folding chaperone"/>
    <property type="evidence" value="ECO:0007669"/>
    <property type="project" value="InterPro"/>
</dbReference>
<dbReference type="GO" id="GO:0051082">
    <property type="term" value="F:unfolded protein binding"/>
    <property type="evidence" value="ECO:0007669"/>
    <property type="project" value="InterPro"/>
</dbReference>
<dbReference type="CDD" id="cd10234">
    <property type="entry name" value="ASKHA_NBD_HSP70_DnaK-like"/>
    <property type="match status" value="1"/>
</dbReference>
<dbReference type="FunFam" id="2.60.34.10:FF:000014">
    <property type="entry name" value="Chaperone protein DnaK HSP70"/>
    <property type="match status" value="1"/>
</dbReference>
<dbReference type="FunFam" id="1.20.1270.10:FF:000001">
    <property type="entry name" value="Molecular chaperone DnaK"/>
    <property type="match status" value="1"/>
</dbReference>
<dbReference type="FunFam" id="3.30.420.40:FF:000004">
    <property type="entry name" value="Molecular chaperone DnaK"/>
    <property type="match status" value="1"/>
</dbReference>
<dbReference type="FunFam" id="3.90.640.10:FF:000003">
    <property type="entry name" value="Molecular chaperone DnaK"/>
    <property type="match status" value="1"/>
</dbReference>
<dbReference type="Gene3D" id="1.20.1270.10">
    <property type="match status" value="1"/>
</dbReference>
<dbReference type="Gene3D" id="3.30.420.40">
    <property type="match status" value="2"/>
</dbReference>
<dbReference type="Gene3D" id="3.90.640.10">
    <property type="entry name" value="Actin, Chain A, domain 4"/>
    <property type="match status" value="1"/>
</dbReference>
<dbReference type="Gene3D" id="2.60.34.10">
    <property type="entry name" value="Substrate Binding Domain Of DNAk, Chain A, domain 1"/>
    <property type="match status" value="1"/>
</dbReference>
<dbReference type="HAMAP" id="MF_00332">
    <property type="entry name" value="DnaK"/>
    <property type="match status" value="1"/>
</dbReference>
<dbReference type="InterPro" id="IPR043129">
    <property type="entry name" value="ATPase_NBD"/>
</dbReference>
<dbReference type="InterPro" id="IPR012725">
    <property type="entry name" value="Chaperone_DnaK"/>
</dbReference>
<dbReference type="InterPro" id="IPR018181">
    <property type="entry name" value="Heat_shock_70_CS"/>
</dbReference>
<dbReference type="InterPro" id="IPR029048">
    <property type="entry name" value="HSP70_C_sf"/>
</dbReference>
<dbReference type="InterPro" id="IPR029047">
    <property type="entry name" value="HSP70_peptide-bd_sf"/>
</dbReference>
<dbReference type="InterPro" id="IPR013126">
    <property type="entry name" value="Hsp_70_fam"/>
</dbReference>
<dbReference type="NCBIfam" id="NF001413">
    <property type="entry name" value="PRK00290.1"/>
    <property type="match status" value="1"/>
</dbReference>
<dbReference type="NCBIfam" id="TIGR02350">
    <property type="entry name" value="prok_dnaK"/>
    <property type="match status" value="1"/>
</dbReference>
<dbReference type="PANTHER" id="PTHR19375">
    <property type="entry name" value="HEAT SHOCK PROTEIN 70KDA"/>
    <property type="match status" value="1"/>
</dbReference>
<dbReference type="Pfam" id="PF00012">
    <property type="entry name" value="HSP70"/>
    <property type="match status" value="1"/>
</dbReference>
<dbReference type="PRINTS" id="PR00301">
    <property type="entry name" value="HEATSHOCK70"/>
</dbReference>
<dbReference type="SUPFAM" id="SSF53067">
    <property type="entry name" value="Actin-like ATPase domain"/>
    <property type="match status" value="2"/>
</dbReference>
<dbReference type="SUPFAM" id="SSF100934">
    <property type="entry name" value="Heat shock protein 70kD (HSP70), C-terminal subdomain"/>
    <property type="match status" value="1"/>
</dbReference>
<dbReference type="SUPFAM" id="SSF100920">
    <property type="entry name" value="Heat shock protein 70kD (HSP70), peptide-binding domain"/>
    <property type="match status" value="1"/>
</dbReference>
<dbReference type="PROSITE" id="PS00297">
    <property type="entry name" value="HSP70_1"/>
    <property type="match status" value="1"/>
</dbReference>
<dbReference type="PROSITE" id="PS00329">
    <property type="entry name" value="HSP70_2"/>
    <property type="match status" value="1"/>
</dbReference>
<dbReference type="PROSITE" id="PS01036">
    <property type="entry name" value="HSP70_3"/>
    <property type="match status" value="1"/>
</dbReference>
<gene>
    <name evidence="1" type="primary">dnaK</name>
    <name type="ordered locus">CHAB381_1119</name>
</gene>
<reference key="1">
    <citation type="submission" date="2007-07" db="EMBL/GenBank/DDBJ databases">
        <title>Complete genome sequence of Campylobacter hominis ATCC BAA-381, a commensal isolated from the human gastrointestinal tract.</title>
        <authorList>
            <person name="Fouts D.E."/>
            <person name="Mongodin E.F."/>
            <person name="Puiu D."/>
            <person name="Sebastian Y."/>
            <person name="Miller W.G."/>
            <person name="Mandrell R.E."/>
            <person name="Nelson K.E."/>
        </authorList>
    </citation>
    <scope>NUCLEOTIDE SEQUENCE [LARGE SCALE GENOMIC DNA]</scope>
    <source>
        <strain>ATCC BAA-381 / DSM 21671 / CCUG 45161 / LMG 19568 / NCTC 13146 / CH001A</strain>
    </source>
</reference>
<evidence type="ECO:0000255" key="1">
    <source>
        <dbReference type="HAMAP-Rule" id="MF_00332"/>
    </source>
</evidence>
<evidence type="ECO:0000256" key="2">
    <source>
        <dbReference type="SAM" id="MobiDB-lite"/>
    </source>
</evidence>
<protein>
    <recommendedName>
        <fullName evidence="1">Chaperone protein DnaK</fullName>
    </recommendedName>
    <alternativeName>
        <fullName evidence="1">HSP70</fullName>
    </alternativeName>
    <alternativeName>
        <fullName evidence="1">Heat shock 70 kDa protein</fullName>
    </alternativeName>
    <alternativeName>
        <fullName evidence="1">Heat shock protein 70</fullName>
    </alternativeName>
</protein>
<sequence>MSKVIGIDLGTTNSCVSVYERGESKIIPNKEGKNTTPSVVAFTDKGEILVGDSAKRQAVTNPEKTIYSIKRIMGLMMNEKNAQEAKKRLPYKIVDRNGACAVEIAGKVYTPQEISAKVLMKLKEDAESYLGEKVVDAVITVPAYFNDSQRKATKEAGTIAGLNVLRIINEPTAAALAYGLDKKESERIVVYDLGGGTFDVTVLETGDSVVEVLATGGNAFLGGDDFDNKLIDYLLSEFKNESGIDIKGDVMAMQRLKEAAENAKKELSSAMETTVNLPFITADQTGPKHLMKTISRAKFEGMIDNLVGETISTLNSVVSDAGLKMSDIKEVVMVGGSTRVPLVCEEVKKAFGKDLNKSVNPDEVVAVGAAVQGAVIKGDVKDVLLLDVTPLSLGIETLGGIMTKLIDKGTTIPTKKSQVFSTAEDNQSAVTINVLQGEREFARDNKSLGNFNLDGIMPAPRGVPQIEVEFDIDANGILTVSAKDKATGKATDIKITGSSGLSDEEIDKMVKDAELHKEDDKKRKESVDARNGADAIAHQTEKTLNEMGEKIPADLRAKIEAALNDLKAVLKDENATKEQIDAKVSALSKTAEEMYKAASAGKNAGGTAGGNGNAGSNGNSGAKKDDDVIDAEVE</sequence>
<accession>A7I2D4</accession>